<evidence type="ECO:0000255" key="1">
    <source>
        <dbReference type="HAMAP-Rule" id="MF_04085"/>
    </source>
</evidence>
<organism>
    <name type="scientific">Allpahuayo mammarenavirus (isolate Rat/Peru/CLHP-2472/1997)</name>
    <name type="common">ALLV</name>
    <dbReference type="NCBI Taxonomy" id="144752"/>
    <lineage>
        <taxon>Viruses</taxon>
        <taxon>Riboviria</taxon>
        <taxon>Orthornavirae</taxon>
        <taxon>Negarnaviricota</taxon>
        <taxon>Polyploviricotina</taxon>
        <taxon>Ellioviricetes</taxon>
        <taxon>Bunyavirales</taxon>
        <taxon>Arenaviridae</taxon>
        <taxon>Mammarenavirus</taxon>
    </lineage>
</organism>
<keyword id="KW-0167">Capsid protein</keyword>
<keyword id="KW-1139">Helical capsid protein</keyword>
<keyword id="KW-1035">Host cytoplasm</keyword>
<keyword id="KW-0945">Host-virus interaction</keyword>
<keyword id="KW-0378">Hydrolase</keyword>
<keyword id="KW-1224">Inhibition of host IKBKE by virus</keyword>
<keyword id="KW-1090">Inhibition of host innate immune response by virus</keyword>
<keyword id="KW-1113">Inhibition of host RLR pathway by virus</keyword>
<keyword id="KW-0922">Interferon antiviral system evasion</keyword>
<keyword id="KW-0464">Manganese</keyword>
<keyword id="KW-0479">Metal-binding</keyword>
<keyword id="KW-0687">Ribonucleoprotein</keyword>
<keyword id="KW-0694">RNA-binding</keyword>
<keyword id="KW-0899">Viral immunoevasion</keyword>
<keyword id="KW-0543">Viral nucleoprotein</keyword>
<keyword id="KW-0946">Virion</keyword>
<keyword id="KW-0862">Zinc</keyword>
<name>NCAP_ALLVP</name>
<proteinExistence type="inferred from homology"/>
<protein>
    <recommendedName>
        <fullName evidence="1">Nucleoprotein</fullName>
        <ecNumber evidence="1">3.1.13.-</ecNumber>
    </recommendedName>
    <alternativeName>
        <fullName evidence="1">Nucleocapsid protein</fullName>
    </alternativeName>
    <alternativeName>
        <fullName evidence="1">Protein N</fullName>
    </alternativeName>
</protein>
<comment type="function">
    <text evidence="1">Encapsidates the genome, protecting it from nucleases. The encapsidated genomic RNA is termed the nucleocapsid (NC). Serves as template for viral transcription and replication. The increased presence of protein N in host cell does not seem to trigger the switch from transcription to replication as observed in other negative strain RNA viruses. Through the interaction with host IKBKE, strongly inhibits the phosphorylation and nuclear translocation of host IRF3, a protein involved in interferon activation pathway, leading to the inhibition of interferon-beta and IRF3-dependent promoters activation. Also encodes a functional 3'-5' exoribonuclease that degrades preferentially dsRNA substrates and thereby participates in the suppression of interferon induction.</text>
</comment>
<comment type="subunit">
    <text evidence="1">Homomultimerizes to form the nucleocapsid. Binds to viral genomic RNA. Interacts with glycoprotein G2. Interacts with protein Z; this interaction probably directs the encapsidated genome to budding sites. Interacts with protein L; this interaction does not interfere with Z-L interaction. Interacts with host IKBKE (via Protein kinase domain); the interaction inhibits IKBKE kinase activity.</text>
</comment>
<comment type="subcellular location">
    <subcellularLocation>
        <location evidence="1">Virion</location>
    </subcellularLocation>
    <subcellularLocation>
        <location evidence="1">Host cytoplasm</location>
    </subcellularLocation>
</comment>
<comment type="domain">
    <text evidence="1">The N-terminal region is important for the cap-binding activity while the C-terminal region contains the 3'-5' exoribonuclease activity. A CCHE zinc binding site is present in the C-terminal region and may thus contribute to the substrate binding and/or the specificity of the exonuclease activity.</text>
</comment>
<comment type="similarity">
    <text evidence="1">Belongs to the arenaviridae nucleocapsid protein family.</text>
</comment>
<organismHost>
    <name type="scientific">Oecomys bicolor</name>
    <name type="common">Bicolored arboreal rice rat</name>
    <dbReference type="NCBI Taxonomy" id="48011"/>
</organismHost>
<organismHost>
    <name type="scientific">Oecomys roberti</name>
    <name type="common">Robert's arboreal rice rat</name>
    <dbReference type="NCBI Taxonomy" id="48012"/>
</organismHost>
<gene>
    <name evidence="1" type="primary">N</name>
</gene>
<reference key="1">
    <citation type="journal article" date="2001" name="Virology">
        <title>Allpahuayo virus: a newly recognized arenavirus (arenaviridae) from arboreal rice rats (oecomys bicolor and oecomys paricola) in northeastern peru.</title>
        <authorList>
            <person name="Moncayo A.C."/>
            <person name="Hice C.L."/>
            <person name="Watts D.M."/>
            <person name="Travassos de Rosa A.P."/>
            <person name="Guzman H."/>
            <person name="Russell K.L."/>
            <person name="Calampa C."/>
            <person name="Gozalo A."/>
            <person name="Popov V.L."/>
            <person name="Weaver S.C."/>
            <person name="Tesh R.B."/>
        </authorList>
    </citation>
    <scope>NUCLEOTIDE SEQUENCE [GENOMIC RNA]</scope>
</reference>
<feature type="chain" id="PRO_0000361003" description="Nucleoprotein">
    <location>
        <begin position="1"/>
        <end position="561"/>
    </location>
</feature>
<feature type="region of interest" description="Binding site for the cap structure m7GTP" evidence="1">
    <location>
        <begin position="53"/>
        <end position="237"/>
    </location>
</feature>
<feature type="binding site" evidence="1">
    <location>
        <position position="380"/>
    </location>
    <ligand>
        <name>Mn(2+)</name>
        <dbReference type="ChEBI" id="CHEBI:29035"/>
    </ligand>
</feature>
<feature type="binding site" evidence="1">
    <location>
        <position position="382"/>
    </location>
    <ligand>
        <name>Mn(2+)</name>
        <dbReference type="ChEBI" id="CHEBI:29035"/>
    </ligand>
</feature>
<feature type="binding site" evidence="1">
    <location>
        <position position="390"/>
    </location>
    <ligand>
        <name>Zn(2+)</name>
        <dbReference type="ChEBI" id="CHEBI:29105"/>
    </ligand>
</feature>
<feature type="binding site" evidence="1">
    <location>
        <position position="497"/>
    </location>
    <ligand>
        <name>Zn(2+)</name>
        <dbReference type="ChEBI" id="CHEBI:29105"/>
    </ligand>
</feature>
<feature type="binding site" evidence="1">
    <location>
        <position position="500"/>
    </location>
    <ligand>
        <name>Zn(2+)</name>
        <dbReference type="ChEBI" id="CHEBI:29105"/>
    </ligand>
</feature>
<feature type="binding site" evidence="1">
    <location>
        <position position="521"/>
    </location>
    <ligand>
        <name>Zn(2+)</name>
        <dbReference type="ChEBI" id="CHEBI:29105"/>
    </ligand>
</feature>
<feature type="binding site" evidence="1">
    <location>
        <position position="525"/>
    </location>
    <ligand>
        <name>Mn(2+)</name>
        <dbReference type="ChEBI" id="CHEBI:29035"/>
    </ligand>
</feature>
<feature type="site" description="Important for exonuclease activity" evidence="1">
    <location>
        <position position="457"/>
    </location>
</feature>
<dbReference type="EC" id="3.1.13.-" evidence="1"/>
<dbReference type="EMBL" id="AY012687">
    <property type="protein sequence ID" value="AAG42532.1"/>
    <property type="molecule type" value="Genomic_RNA"/>
</dbReference>
<dbReference type="RefSeq" id="YP_001649220.1">
    <property type="nucleotide sequence ID" value="NC_010253.1"/>
</dbReference>
<dbReference type="SMR" id="Q9DK04"/>
<dbReference type="GeneID" id="5848531"/>
<dbReference type="KEGG" id="vg:5848531"/>
<dbReference type="OrthoDB" id="3135at10239"/>
<dbReference type="Proteomes" id="UP000009258">
    <property type="component" value="Genome"/>
</dbReference>
<dbReference type="GO" id="GO:0019029">
    <property type="term" value="C:helical viral capsid"/>
    <property type="evidence" value="ECO:0007669"/>
    <property type="project" value="UniProtKB-UniRule"/>
</dbReference>
<dbReference type="GO" id="GO:0030430">
    <property type="term" value="C:host cell cytoplasm"/>
    <property type="evidence" value="ECO:0007669"/>
    <property type="project" value="UniProtKB-SubCell"/>
</dbReference>
<dbReference type="GO" id="GO:1990904">
    <property type="term" value="C:ribonucleoprotein complex"/>
    <property type="evidence" value="ECO:0007669"/>
    <property type="project" value="UniProtKB-KW"/>
</dbReference>
<dbReference type="GO" id="GO:0019013">
    <property type="term" value="C:viral nucleocapsid"/>
    <property type="evidence" value="ECO:0007669"/>
    <property type="project" value="UniProtKB-UniRule"/>
</dbReference>
<dbReference type="GO" id="GO:0016787">
    <property type="term" value="F:hydrolase activity"/>
    <property type="evidence" value="ECO:0007669"/>
    <property type="project" value="UniProtKB-KW"/>
</dbReference>
<dbReference type="GO" id="GO:0046872">
    <property type="term" value="F:metal ion binding"/>
    <property type="evidence" value="ECO:0007669"/>
    <property type="project" value="UniProtKB-UniRule"/>
</dbReference>
<dbReference type="GO" id="GO:0003723">
    <property type="term" value="F:RNA binding"/>
    <property type="evidence" value="ECO:0007669"/>
    <property type="project" value="UniProtKB-UniRule"/>
</dbReference>
<dbReference type="GO" id="GO:0039689">
    <property type="term" value="P:negative stranded viral RNA replication"/>
    <property type="evidence" value="ECO:0000250"/>
    <property type="project" value="UniProtKB"/>
</dbReference>
<dbReference type="GO" id="GO:0039696">
    <property type="term" value="P:RNA-templated viral transcription"/>
    <property type="evidence" value="ECO:0000250"/>
    <property type="project" value="UniProtKB"/>
</dbReference>
<dbReference type="GO" id="GO:0039724">
    <property type="term" value="P:symbiont-mediated suppression of host cytoplasmic pattern recognition receptor signaling pathway via inhibition of IKBKE activity"/>
    <property type="evidence" value="ECO:0007669"/>
    <property type="project" value="UniProtKB-UniRule"/>
</dbReference>
<dbReference type="FunFam" id="1.10.150.550:FF:000001">
    <property type="entry name" value="Nucleoprotein"/>
    <property type="match status" value="1"/>
</dbReference>
<dbReference type="FunFam" id="1.10.150.550:FF:000002">
    <property type="entry name" value="Nucleoprotein"/>
    <property type="match status" value="1"/>
</dbReference>
<dbReference type="FunFam" id="3.30.420.410:FF:000001">
    <property type="entry name" value="Nucleoprotein"/>
    <property type="match status" value="1"/>
</dbReference>
<dbReference type="Gene3D" id="3.30.420.410">
    <property type="entry name" value="Arenaviral nucleoprotein, C-terminal domain"/>
    <property type="match status" value="1"/>
</dbReference>
<dbReference type="Gene3D" id="1.10.150.550">
    <property type="entry name" value="Arenavirus nucleocapsid protein, head domain"/>
    <property type="match status" value="3"/>
</dbReference>
<dbReference type="HAMAP" id="MF_04085">
    <property type="entry name" value="ARENA_NCAP"/>
    <property type="match status" value="1"/>
</dbReference>
<dbReference type="InterPro" id="IPR000229">
    <property type="entry name" value="Nucleocapsid_arenaviridae"/>
</dbReference>
<dbReference type="InterPro" id="IPR035084">
    <property type="entry name" value="Nucleocapsid_C_arenaviridae"/>
</dbReference>
<dbReference type="InterPro" id="IPR038115">
    <property type="entry name" value="Nucleocapsid_C_sf"/>
</dbReference>
<dbReference type="InterPro" id="IPR035083">
    <property type="entry name" value="Nucleocapsid_N_arenaviridae"/>
</dbReference>
<dbReference type="Pfam" id="PF17290">
    <property type="entry name" value="Arena_ncap_C"/>
    <property type="match status" value="1"/>
</dbReference>
<dbReference type="Pfam" id="PF00843">
    <property type="entry name" value="Arena_nucleocap"/>
    <property type="match status" value="1"/>
</dbReference>
<dbReference type="PIRSF" id="PIRSF004029">
    <property type="entry name" value="N_ArenaV"/>
    <property type="match status" value="1"/>
</dbReference>
<sequence length="561" mass="62354">MSSENVPSFRWTQSLRRGLSNWTHAVKGDVLADARAIVSALDFHQVAQVQRMMRKDKRSEADLTRLRDMNKEVDALMMMRSAQKDNILKVGGLSKDELMELASDLDKLRKKVQRTEGGGQPGVYAGNLTSSQLNQRSEILKMMGMGTGPRGPVGGVVKVWDIKDSSLLVNQFGSMPALTIACMTQQGGEQMNDVVQALTSLGLVYTVKYPNLSDLEKLTEKHPCLKLITQEPAQINISGYNLSLSAAVKADACMIDGGNMLETLQVKPSMFSTLIKTILEVKNREGMFVSPSPGQRNPYENILYKVCLSGDGWPYIGSRSQIKGRAWENTTVDLEGKPSVNHPPVRNGGSPDLKQIPKTKEDEVIRAIEQLDPRGTTWVDIEGPPGDPVELALFQPETGNYLHCYRRPHNENAFKDQSKFSHGLLLKDLADTQPGLISCIIRHLPNNMVLTAQGNDDIIKLLEMHGRRDIKVLDVKLSSDQARLMEDVVWERYNMLCVKHTGLVIKKKKKGAAPGSANPHCALLDCIMFDATVTGYLRDQKPKRLLPLDTLYRDNANLINL</sequence>
<accession>Q9DK04</accession>